<dbReference type="EC" id="7.1.2.2" evidence="1"/>
<dbReference type="EMBL" id="AP008230">
    <property type="protein sequence ID" value="BAE86703.1"/>
    <property type="molecule type" value="Genomic_DNA"/>
</dbReference>
<dbReference type="RefSeq" id="WP_011462231.1">
    <property type="nucleotide sequence ID" value="NC_007907.1"/>
</dbReference>
<dbReference type="SMR" id="Q24MN9"/>
<dbReference type="STRING" id="138119.DSY4914"/>
<dbReference type="KEGG" id="dsy:DSY4914"/>
<dbReference type="eggNOG" id="COG0056">
    <property type="taxonomic scope" value="Bacteria"/>
</dbReference>
<dbReference type="HOGENOM" id="CLU_010091_2_1_9"/>
<dbReference type="Proteomes" id="UP000001946">
    <property type="component" value="Chromosome"/>
</dbReference>
<dbReference type="GO" id="GO:0005886">
    <property type="term" value="C:plasma membrane"/>
    <property type="evidence" value="ECO:0007669"/>
    <property type="project" value="UniProtKB-SubCell"/>
</dbReference>
<dbReference type="GO" id="GO:0045259">
    <property type="term" value="C:proton-transporting ATP synthase complex"/>
    <property type="evidence" value="ECO:0007669"/>
    <property type="project" value="UniProtKB-KW"/>
</dbReference>
<dbReference type="GO" id="GO:0043531">
    <property type="term" value="F:ADP binding"/>
    <property type="evidence" value="ECO:0007669"/>
    <property type="project" value="TreeGrafter"/>
</dbReference>
<dbReference type="GO" id="GO:0005524">
    <property type="term" value="F:ATP binding"/>
    <property type="evidence" value="ECO:0007669"/>
    <property type="project" value="UniProtKB-UniRule"/>
</dbReference>
<dbReference type="GO" id="GO:0046933">
    <property type="term" value="F:proton-transporting ATP synthase activity, rotational mechanism"/>
    <property type="evidence" value="ECO:0007669"/>
    <property type="project" value="UniProtKB-UniRule"/>
</dbReference>
<dbReference type="CDD" id="cd18113">
    <property type="entry name" value="ATP-synt_F1_alpha_C"/>
    <property type="match status" value="1"/>
</dbReference>
<dbReference type="CDD" id="cd18116">
    <property type="entry name" value="ATP-synt_F1_alpha_N"/>
    <property type="match status" value="1"/>
</dbReference>
<dbReference type="CDD" id="cd01132">
    <property type="entry name" value="F1-ATPase_alpha_CD"/>
    <property type="match status" value="1"/>
</dbReference>
<dbReference type="FunFam" id="1.20.150.20:FF:000001">
    <property type="entry name" value="ATP synthase subunit alpha"/>
    <property type="match status" value="1"/>
</dbReference>
<dbReference type="FunFam" id="2.40.30.20:FF:000001">
    <property type="entry name" value="ATP synthase subunit alpha"/>
    <property type="match status" value="1"/>
</dbReference>
<dbReference type="FunFam" id="3.40.50.300:FF:000002">
    <property type="entry name" value="ATP synthase subunit alpha"/>
    <property type="match status" value="1"/>
</dbReference>
<dbReference type="Gene3D" id="2.40.30.20">
    <property type="match status" value="1"/>
</dbReference>
<dbReference type="Gene3D" id="1.20.150.20">
    <property type="entry name" value="ATP synthase alpha/beta chain, C-terminal domain"/>
    <property type="match status" value="1"/>
</dbReference>
<dbReference type="Gene3D" id="3.40.50.300">
    <property type="entry name" value="P-loop containing nucleotide triphosphate hydrolases"/>
    <property type="match status" value="1"/>
</dbReference>
<dbReference type="HAMAP" id="MF_01346">
    <property type="entry name" value="ATP_synth_alpha_bact"/>
    <property type="match status" value="1"/>
</dbReference>
<dbReference type="InterPro" id="IPR023366">
    <property type="entry name" value="ATP_synth_asu-like_sf"/>
</dbReference>
<dbReference type="InterPro" id="IPR000793">
    <property type="entry name" value="ATP_synth_asu_C"/>
</dbReference>
<dbReference type="InterPro" id="IPR038376">
    <property type="entry name" value="ATP_synth_asu_C_sf"/>
</dbReference>
<dbReference type="InterPro" id="IPR033732">
    <property type="entry name" value="ATP_synth_F1_a_nt-bd_dom"/>
</dbReference>
<dbReference type="InterPro" id="IPR005294">
    <property type="entry name" value="ATP_synth_F1_asu"/>
</dbReference>
<dbReference type="InterPro" id="IPR020003">
    <property type="entry name" value="ATPase_a/bsu_AS"/>
</dbReference>
<dbReference type="InterPro" id="IPR004100">
    <property type="entry name" value="ATPase_F1/V1/A1_a/bsu_N"/>
</dbReference>
<dbReference type="InterPro" id="IPR036121">
    <property type="entry name" value="ATPase_F1/V1/A1_a/bsu_N_sf"/>
</dbReference>
<dbReference type="InterPro" id="IPR000194">
    <property type="entry name" value="ATPase_F1/V1/A1_a/bsu_nucl-bd"/>
</dbReference>
<dbReference type="InterPro" id="IPR027417">
    <property type="entry name" value="P-loop_NTPase"/>
</dbReference>
<dbReference type="NCBIfam" id="TIGR00962">
    <property type="entry name" value="atpA"/>
    <property type="match status" value="1"/>
</dbReference>
<dbReference type="NCBIfam" id="NF009884">
    <property type="entry name" value="PRK13343.1"/>
    <property type="match status" value="1"/>
</dbReference>
<dbReference type="PANTHER" id="PTHR48082">
    <property type="entry name" value="ATP SYNTHASE SUBUNIT ALPHA, MITOCHONDRIAL"/>
    <property type="match status" value="1"/>
</dbReference>
<dbReference type="PANTHER" id="PTHR48082:SF2">
    <property type="entry name" value="ATP SYNTHASE SUBUNIT ALPHA, MITOCHONDRIAL"/>
    <property type="match status" value="1"/>
</dbReference>
<dbReference type="Pfam" id="PF00006">
    <property type="entry name" value="ATP-synt_ab"/>
    <property type="match status" value="1"/>
</dbReference>
<dbReference type="Pfam" id="PF00306">
    <property type="entry name" value="ATP-synt_ab_C"/>
    <property type="match status" value="1"/>
</dbReference>
<dbReference type="Pfam" id="PF02874">
    <property type="entry name" value="ATP-synt_ab_N"/>
    <property type="match status" value="1"/>
</dbReference>
<dbReference type="PIRSF" id="PIRSF039088">
    <property type="entry name" value="F_ATPase_subunit_alpha"/>
    <property type="match status" value="1"/>
</dbReference>
<dbReference type="SUPFAM" id="SSF47917">
    <property type="entry name" value="C-terminal domain of alpha and beta subunits of F1 ATP synthase"/>
    <property type="match status" value="1"/>
</dbReference>
<dbReference type="SUPFAM" id="SSF50615">
    <property type="entry name" value="N-terminal domain of alpha and beta subunits of F1 ATP synthase"/>
    <property type="match status" value="1"/>
</dbReference>
<dbReference type="SUPFAM" id="SSF52540">
    <property type="entry name" value="P-loop containing nucleoside triphosphate hydrolases"/>
    <property type="match status" value="1"/>
</dbReference>
<dbReference type="PROSITE" id="PS00152">
    <property type="entry name" value="ATPASE_ALPHA_BETA"/>
    <property type="match status" value="1"/>
</dbReference>
<feature type="chain" id="PRO_0000256087" description="ATP synthase subunit alpha">
    <location>
        <begin position="1"/>
        <end position="502"/>
    </location>
</feature>
<feature type="binding site" evidence="1">
    <location>
        <begin position="169"/>
        <end position="176"/>
    </location>
    <ligand>
        <name>ATP</name>
        <dbReference type="ChEBI" id="CHEBI:30616"/>
    </ligand>
</feature>
<feature type="site" description="Required for activity" evidence="1">
    <location>
        <position position="362"/>
    </location>
</feature>
<proteinExistence type="inferred from homology"/>
<evidence type="ECO:0000255" key="1">
    <source>
        <dbReference type="HAMAP-Rule" id="MF_01346"/>
    </source>
</evidence>
<gene>
    <name evidence="1" type="primary">atpA</name>
    <name type="ordered locus">DSY4914</name>
</gene>
<comment type="function">
    <text evidence="1">Produces ATP from ADP in the presence of a proton gradient across the membrane. The alpha chain is a regulatory subunit.</text>
</comment>
<comment type="catalytic activity">
    <reaction evidence="1">
        <text>ATP + H2O + 4 H(+)(in) = ADP + phosphate + 5 H(+)(out)</text>
        <dbReference type="Rhea" id="RHEA:57720"/>
        <dbReference type="ChEBI" id="CHEBI:15377"/>
        <dbReference type="ChEBI" id="CHEBI:15378"/>
        <dbReference type="ChEBI" id="CHEBI:30616"/>
        <dbReference type="ChEBI" id="CHEBI:43474"/>
        <dbReference type="ChEBI" id="CHEBI:456216"/>
        <dbReference type="EC" id="7.1.2.2"/>
    </reaction>
</comment>
<comment type="subunit">
    <text evidence="1">F-type ATPases have 2 components, CF(1) - the catalytic core - and CF(0) - the membrane proton channel. CF(1) has five subunits: alpha(3), beta(3), gamma(1), delta(1), epsilon(1). CF(0) has three main subunits: a(1), b(2) and c(9-12). The alpha and beta chains form an alternating ring which encloses part of the gamma chain. CF(1) is attached to CF(0) by a central stalk formed by the gamma and epsilon chains, while a peripheral stalk is formed by the delta and b chains.</text>
</comment>
<comment type="subcellular location">
    <subcellularLocation>
        <location evidence="1">Cell membrane</location>
        <topology evidence="1">Peripheral membrane protein</topology>
    </subcellularLocation>
</comment>
<comment type="similarity">
    <text evidence="1">Belongs to the ATPase alpha/beta chains family.</text>
</comment>
<protein>
    <recommendedName>
        <fullName evidence="1">ATP synthase subunit alpha</fullName>
        <ecNumber evidence="1">7.1.2.2</ecNumber>
    </recommendedName>
    <alternativeName>
        <fullName evidence="1">ATP synthase F1 sector subunit alpha</fullName>
    </alternativeName>
    <alternativeName>
        <fullName evidence="1">F-ATPase subunit alpha</fullName>
    </alternativeName>
</protein>
<keyword id="KW-0066">ATP synthesis</keyword>
<keyword id="KW-0067">ATP-binding</keyword>
<keyword id="KW-1003">Cell membrane</keyword>
<keyword id="KW-0139">CF(1)</keyword>
<keyword id="KW-0375">Hydrogen ion transport</keyword>
<keyword id="KW-0406">Ion transport</keyword>
<keyword id="KW-0472">Membrane</keyword>
<keyword id="KW-0547">Nucleotide-binding</keyword>
<keyword id="KW-1185">Reference proteome</keyword>
<keyword id="KW-1278">Translocase</keyword>
<keyword id="KW-0813">Transport</keyword>
<reference key="1">
    <citation type="journal article" date="2006" name="J. Bacteriol.">
        <title>Complete genome sequence of the dehalorespiring bacterium Desulfitobacterium hafniense Y51 and comparison with Dehalococcoides ethenogenes 195.</title>
        <authorList>
            <person name="Nonaka H."/>
            <person name="Keresztes G."/>
            <person name="Shinoda Y."/>
            <person name="Ikenaga Y."/>
            <person name="Abe M."/>
            <person name="Naito K."/>
            <person name="Inatomi K."/>
            <person name="Furukawa K."/>
            <person name="Inui M."/>
            <person name="Yukawa H."/>
        </authorList>
    </citation>
    <scope>NUCLEOTIDE SEQUENCE [LARGE SCALE GENOMIC DNA]</scope>
    <source>
        <strain>Y51</strain>
    </source>
</reference>
<sequence length="502" mass="54841">MNLRPEEISSIIKQQIERYDSAVEVVDVGTVIQVGDGIARVHGLEKAMSGELLEFPGGIYGMAMNLEEDNIGCIILGKFTEIREGDQVKRTGRIVEVPVGEAMIGRVVNALGQPIDGKGEIKTDKFRPIENTAPGVVYRKSVHEPLQTGLKSIDAIVPIGRGQRELIIGDRQTGKTAVAVDTIINQKGKDVICIYVAVGQKASTVAGVVKTLADHGAMDYSIVVSATASEPAPMLYIAPYSGCAMGEEFMYNGKHVLIIYDDLTKQAAAYRELSLLLKRPPGREAYPGDVFYLHSRLLERAAKLSPDLGSGSMTALPIIETQAGDVSAYIPTNVISITDGQIFLETDLFNAGFRPAINVGISVSRVGGSAQIKAMKQVAGQLRLDLAQYRELAAFAQFGSDLDKITQMRLTRGERMMEILKQKQYEPMVVEEQVVVLYAAVKGFLDDIPVDKIKSFEEDYLRTMRTTKADLLAKIRTEKALNDELNAEIEKAITEVKEGFLG</sequence>
<accession>Q24MN9</accession>
<name>ATPA_DESHY</name>
<organism>
    <name type="scientific">Desulfitobacterium hafniense (strain Y51)</name>
    <dbReference type="NCBI Taxonomy" id="138119"/>
    <lineage>
        <taxon>Bacteria</taxon>
        <taxon>Bacillati</taxon>
        <taxon>Bacillota</taxon>
        <taxon>Clostridia</taxon>
        <taxon>Eubacteriales</taxon>
        <taxon>Desulfitobacteriaceae</taxon>
        <taxon>Desulfitobacterium</taxon>
    </lineage>
</organism>